<keyword id="KW-0342">GTP-binding</keyword>
<keyword id="KW-0496">Mitochondrion</keyword>
<keyword id="KW-0547">Nucleotide-binding</keyword>
<keyword id="KW-1185">Reference proteome</keyword>
<keyword id="KW-0809">Transit peptide</keyword>
<protein>
    <recommendedName>
        <fullName>Uncharacterized GTP-binding protein P8A3.11c, mitochondrial</fullName>
    </recommendedName>
</protein>
<name>YLWB_SCHPO</name>
<organism>
    <name type="scientific">Schizosaccharomyces pombe (strain 972 / ATCC 24843)</name>
    <name type="common">Fission yeast</name>
    <dbReference type="NCBI Taxonomy" id="284812"/>
    <lineage>
        <taxon>Eukaryota</taxon>
        <taxon>Fungi</taxon>
        <taxon>Dikarya</taxon>
        <taxon>Ascomycota</taxon>
        <taxon>Taphrinomycotina</taxon>
        <taxon>Schizosaccharomycetes</taxon>
        <taxon>Schizosaccharomycetales</taxon>
        <taxon>Schizosaccharomycetaceae</taxon>
        <taxon>Schizosaccharomyces</taxon>
    </lineage>
</organism>
<comment type="subcellular location">
    <subcellularLocation>
        <location evidence="4">Mitochondrion</location>
    </subcellularLocation>
</comment>
<comment type="similarity">
    <text evidence="2">Belongs to the TRAFAC class OBG-HflX-like GTPase superfamily. OBG GTPase family.</text>
</comment>
<feature type="transit peptide" description="Mitochondrion" evidence="1">
    <location>
        <begin position="1"/>
        <end status="unknown"/>
    </location>
</feature>
<feature type="chain" id="PRO_0000316233" description="Uncharacterized GTP-binding protein P8A3.11c, mitochondrial">
    <location>
        <begin status="unknown"/>
        <end position="419"/>
    </location>
</feature>
<feature type="domain" description="Obg" evidence="3">
    <location>
        <begin position="29"/>
        <end position="236"/>
    </location>
</feature>
<feature type="domain" description="OBG-type G" evidence="2">
    <location>
        <begin position="237"/>
        <end position="414"/>
    </location>
</feature>
<feature type="binding site" evidence="2">
    <location>
        <begin position="243"/>
        <end position="250"/>
    </location>
    <ligand>
        <name>GTP</name>
        <dbReference type="ChEBI" id="CHEBI:37565"/>
    </ligand>
</feature>
<feature type="binding site" evidence="2">
    <location>
        <begin position="295"/>
        <end position="299"/>
    </location>
    <ligand>
        <name>GTP</name>
        <dbReference type="ChEBI" id="CHEBI:37565"/>
    </ligand>
</feature>
<feature type="binding site" evidence="2">
    <location>
        <begin position="364"/>
        <end position="367"/>
    </location>
    <ligand>
        <name>GTP</name>
        <dbReference type="ChEBI" id="CHEBI:37565"/>
    </ligand>
</feature>
<evidence type="ECO:0000255" key="1"/>
<evidence type="ECO:0000255" key="2">
    <source>
        <dbReference type="PROSITE-ProRule" id="PRU01047"/>
    </source>
</evidence>
<evidence type="ECO:0000255" key="3">
    <source>
        <dbReference type="PROSITE-ProRule" id="PRU01231"/>
    </source>
</evidence>
<evidence type="ECO:0000269" key="4">
    <source>
    </source>
</evidence>
<dbReference type="EMBL" id="CU329670">
    <property type="protein sequence ID" value="CAB55178.1"/>
    <property type="molecule type" value="Genomic_DNA"/>
</dbReference>
<dbReference type="PIR" id="T39248">
    <property type="entry name" value="T39248"/>
</dbReference>
<dbReference type="SMR" id="Q9UT06"/>
<dbReference type="FunCoup" id="Q9UT06">
    <property type="interactions" value="448"/>
</dbReference>
<dbReference type="STRING" id="284812.Q9UT06"/>
<dbReference type="iPTMnet" id="Q9UT06"/>
<dbReference type="PaxDb" id="4896-SPAP8A3.11c.1"/>
<dbReference type="EnsemblFungi" id="SPAP8A3.11c.1">
    <property type="protein sequence ID" value="SPAP8A3.11c.1:pep"/>
    <property type="gene ID" value="SPAP8A3.11c"/>
</dbReference>
<dbReference type="KEGG" id="spo:2543126"/>
<dbReference type="PomBase" id="SPAP8A3.11c"/>
<dbReference type="VEuPathDB" id="FungiDB:SPAP8A3.11c"/>
<dbReference type="eggNOG" id="KOG1489">
    <property type="taxonomic scope" value="Eukaryota"/>
</dbReference>
<dbReference type="HOGENOM" id="CLU_011747_2_0_1"/>
<dbReference type="InParanoid" id="Q9UT06"/>
<dbReference type="OMA" id="PRVGHWE"/>
<dbReference type="PhylomeDB" id="Q9UT06"/>
<dbReference type="PRO" id="PR:Q9UT06"/>
<dbReference type="Proteomes" id="UP000002485">
    <property type="component" value="Chromosome I"/>
</dbReference>
<dbReference type="GO" id="GO:0005759">
    <property type="term" value="C:mitochondrial matrix"/>
    <property type="evidence" value="ECO:0000305"/>
    <property type="project" value="PomBase"/>
</dbReference>
<dbReference type="GO" id="GO:0005739">
    <property type="term" value="C:mitochondrion"/>
    <property type="evidence" value="ECO:0007005"/>
    <property type="project" value="PomBase"/>
</dbReference>
<dbReference type="GO" id="GO:0005525">
    <property type="term" value="F:GTP binding"/>
    <property type="evidence" value="ECO:0000318"/>
    <property type="project" value="GO_Central"/>
</dbReference>
<dbReference type="GO" id="GO:0003924">
    <property type="term" value="F:GTPase activity"/>
    <property type="evidence" value="ECO:0000318"/>
    <property type="project" value="GO_Central"/>
</dbReference>
<dbReference type="GO" id="GO:0000287">
    <property type="term" value="F:magnesium ion binding"/>
    <property type="evidence" value="ECO:0007669"/>
    <property type="project" value="InterPro"/>
</dbReference>
<dbReference type="GO" id="GO:0043022">
    <property type="term" value="F:ribosome binding"/>
    <property type="evidence" value="ECO:0000266"/>
    <property type="project" value="PomBase"/>
</dbReference>
<dbReference type="GO" id="GO:1902775">
    <property type="term" value="P:mitochondrial large ribosomal subunit assembly"/>
    <property type="evidence" value="ECO:0000266"/>
    <property type="project" value="PomBase"/>
</dbReference>
<dbReference type="CDD" id="cd01898">
    <property type="entry name" value="Obg"/>
    <property type="match status" value="1"/>
</dbReference>
<dbReference type="FunFam" id="2.70.210.12:FF:000001">
    <property type="entry name" value="GTPase Obg"/>
    <property type="match status" value="1"/>
</dbReference>
<dbReference type="Gene3D" id="2.70.210.12">
    <property type="entry name" value="GTP1/OBG domain"/>
    <property type="match status" value="1"/>
</dbReference>
<dbReference type="Gene3D" id="3.40.50.300">
    <property type="entry name" value="P-loop containing nucleotide triphosphate hydrolases"/>
    <property type="match status" value="1"/>
</dbReference>
<dbReference type="InterPro" id="IPR031167">
    <property type="entry name" value="G_OBG"/>
</dbReference>
<dbReference type="InterPro" id="IPR006073">
    <property type="entry name" value="GTP-bd"/>
</dbReference>
<dbReference type="InterPro" id="IPR014100">
    <property type="entry name" value="GTP-bd_Obg/CgtA"/>
</dbReference>
<dbReference type="InterPro" id="IPR006074">
    <property type="entry name" value="GTP1-OBG_CS"/>
</dbReference>
<dbReference type="InterPro" id="IPR006169">
    <property type="entry name" value="GTP1_OBG_dom"/>
</dbReference>
<dbReference type="InterPro" id="IPR036726">
    <property type="entry name" value="GTP1_OBG_dom_sf"/>
</dbReference>
<dbReference type="InterPro" id="IPR045086">
    <property type="entry name" value="OBG_GTPase"/>
</dbReference>
<dbReference type="InterPro" id="IPR027417">
    <property type="entry name" value="P-loop_NTPase"/>
</dbReference>
<dbReference type="NCBIfam" id="NF008956">
    <property type="entry name" value="PRK12299.1"/>
    <property type="match status" value="1"/>
</dbReference>
<dbReference type="PANTHER" id="PTHR11702">
    <property type="entry name" value="DEVELOPMENTALLY REGULATED GTP-BINDING PROTEIN-RELATED"/>
    <property type="match status" value="1"/>
</dbReference>
<dbReference type="PANTHER" id="PTHR11702:SF31">
    <property type="entry name" value="MITOCHONDRIAL RIBOSOME-ASSOCIATED GTPASE 2"/>
    <property type="match status" value="1"/>
</dbReference>
<dbReference type="Pfam" id="PF01018">
    <property type="entry name" value="GTP1_OBG"/>
    <property type="match status" value="2"/>
</dbReference>
<dbReference type="Pfam" id="PF01926">
    <property type="entry name" value="MMR_HSR1"/>
    <property type="match status" value="1"/>
</dbReference>
<dbReference type="PIRSF" id="PIRSF002401">
    <property type="entry name" value="GTP_bd_Obg/CgtA"/>
    <property type="match status" value="1"/>
</dbReference>
<dbReference type="PRINTS" id="PR00326">
    <property type="entry name" value="GTP1OBG"/>
</dbReference>
<dbReference type="SUPFAM" id="SSF82051">
    <property type="entry name" value="Obg GTP-binding protein N-terminal domain"/>
    <property type="match status" value="1"/>
</dbReference>
<dbReference type="SUPFAM" id="SSF52540">
    <property type="entry name" value="P-loop containing nucleoside triphosphate hydrolases"/>
    <property type="match status" value="1"/>
</dbReference>
<dbReference type="PROSITE" id="PS51710">
    <property type="entry name" value="G_OBG"/>
    <property type="match status" value="1"/>
</dbReference>
<dbReference type="PROSITE" id="PS00905">
    <property type="entry name" value="GTP1_OBG"/>
    <property type="match status" value="1"/>
</dbReference>
<dbReference type="PROSITE" id="PS51883">
    <property type="entry name" value="OBG"/>
    <property type="match status" value="1"/>
</dbReference>
<sequence>MLSLRTSISRIQPCLFIRASSYQTEATQPKFQDKIRIRIQGGDGGQGCSSFIKEKFRPYGPPDGGNGGDGGSVYVAVKPGSFNNLSHLSQIHKASNGTNGKGGNRHGSCGKSVILYVPPGTVIREISAVRSEQSLEWVQMPGKTKPPKLKKGQISFVSEATRHGKELLYYRASSMISGAAEYSLEECDTTPQILCYGGVGGLGNVHFLSENNRSPKFATKGLTGEQKLIELELKTICEIGLVGLPNAGKSTLLNCLTASKSKVGEYEFTTIYPKIGTIKTTMPDDHSSFQYRLADIPGIIKGASDGKGLGYDFLRHVERAKMLCLVIDINPKAKIPADQAFQLLWDELNKYEKNLINKVALVIANKADTAAEQDLLLLKAIVERTTKGVAVLPVSAKKQEGLEGLVRGMTQLLQQRLLV</sequence>
<proteinExistence type="inferred from homology"/>
<reference key="1">
    <citation type="journal article" date="2002" name="Nature">
        <title>The genome sequence of Schizosaccharomyces pombe.</title>
        <authorList>
            <person name="Wood V."/>
            <person name="Gwilliam R."/>
            <person name="Rajandream M.A."/>
            <person name="Lyne M.H."/>
            <person name="Lyne R."/>
            <person name="Stewart A."/>
            <person name="Sgouros J.G."/>
            <person name="Peat N."/>
            <person name="Hayles J."/>
            <person name="Baker S.G."/>
            <person name="Basham D."/>
            <person name="Bowman S."/>
            <person name="Brooks K."/>
            <person name="Brown D."/>
            <person name="Brown S."/>
            <person name="Chillingworth T."/>
            <person name="Churcher C.M."/>
            <person name="Collins M."/>
            <person name="Connor R."/>
            <person name="Cronin A."/>
            <person name="Davis P."/>
            <person name="Feltwell T."/>
            <person name="Fraser A."/>
            <person name="Gentles S."/>
            <person name="Goble A."/>
            <person name="Hamlin N."/>
            <person name="Harris D.E."/>
            <person name="Hidalgo J."/>
            <person name="Hodgson G."/>
            <person name="Holroyd S."/>
            <person name="Hornsby T."/>
            <person name="Howarth S."/>
            <person name="Huckle E.J."/>
            <person name="Hunt S."/>
            <person name="Jagels K."/>
            <person name="James K.D."/>
            <person name="Jones L."/>
            <person name="Jones M."/>
            <person name="Leather S."/>
            <person name="McDonald S."/>
            <person name="McLean J."/>
            <person name="Mooney P."/>
            <person name="Moule S."/>
            <person name="Mungall K.L."/>
            <person name="Murphy L.D."/>
            <person name="Niblett D."/>
            <person name="Odell C."/>
            <person name="Oliver K."/>
            <person name="O'Neil S."/>
            <person name="Pearson D."/>
            <person name="Quail M.A."/>
            <person name="Rabbinowitsch E."/>
            <person name="Rutherford K.M."/>
            <person name="Rutter S."/>
            <person name="Saunders D."/>
            <person name="Seeger K."/>
            <person name="Sharp S."/>
            <person name="Skelton J."/>
            <person name="Simmonds M.N."/>
            <person name="Squares R."/>
            <person name="Squares S."/>
            <person name="Stevens K."/>
            <person name="Taylor K."/>
            <person name="Taylor R.G."/>
            <person name="Tivey A."/>
            <person name="Walsh S.V."/>
            <person name="Warren T."/>
            <person name="Whitehead S."/>
            <person name="Woodward J.R."/>
            <person name="Volckaert G."/>
            <person name="Aert R."/>
            <person name="Robben J."/>
            <person name="Grymonprez B."/>
            <person name="Weltjens I."/>
            <person name="Vanstreels E."/>
            <person name="Rieger M."/>
            <person name="Schaefer M."/>
            <person name="Mueller-Auer S."/>
            <person name="Gabel C."/>
            <person name="Fuchs M."/>
            <person name="Duesterhoeft A."/>
            <person name="Fritzc C."/>
            <person name="Holzer E."/>
            <person name="Moestl D."/>
            <person name="Hilbert H."/>
            <person name="Borzym K."/>
            <person name="Langer I."/>
            <person name="Beck A."/>
            <person name="Lehrach H."/>
            <person name="Reinhardt R."/>
            <person name="Pohl T.M."/>
            <person name="Eger P."/>
            <person name="Zimmermann W."/>
            <person name="Wedler H."/>
            <person name="Wambutt R."/>
            <person name="Purnelle B."/>
            <person name="Goffeau A."/>
            <person name="Cadieu E."/>
            <person name="Dreano S."/>
            <person name="Gloux S."/>
            <person name="Lelaure V."/>
            <person name="Mottier S."/>
            <person name="Galibert F."/>
            <person name="Aves S.J."/>
            <person name="Xiang Z."/>
            <person name="Hunt C."/>
            <person name="Moore K."/>
            <person name="Hurst S.M."/>
            <person name="Lucas M."/>
            <person name="Rochet M."/>
            <person name="Gaillardin C."/>
            <person name="Tallada V.A."/>
            <person name="Garzon A."/>
            <person name="Thode G."/>
            <person name="Daga R.R."/>
            <person name="Cruzado L."/>
            <person name="Jimenez J."/>
            <person name="Sanchez M."/>
            <person name="del Rey F."/>
            <person name="Benito J."/>
            <person name="Dominguez A."/>
            <person name="Revuelta J.L."/>
            <person name="Moreno S."/>
            <person name="Armstrong J."/>
            <person name="Forsburg S.L."/>
            <person name="Cerutti L."/>
            <person name="Lowe T."/>
            <person name="McCombie W.R."/>
            <person name="Paulsen I."/>
            <person name="Potashkin J."/>
            <person name="Shpakovski G.V."/>
            <person name="Ussery D."/>
            <person name="Barrell B.G."/>
            <person name="Nurse P."/>
        </authorList>
    </citation>
    <scope>NUCLEOTIDE SEQUENCE [LARGE SCALE GENOMIC DNA]</scope>
    <source>
        <strain>972 / ATCC 24843</strain>
    </source>
</reference>
<reference key="2">
    <citation type="journal article" date="2006" name="Nat. Biotechnol.">
        <title>ORFeome cloning and global analysis of protein localization in the fission yeast Schizosaccharomyces pombe.</title>
        <authorList>
            <person name="Matsuyama A."/>
            <person name="Arai R."/>
            <person name="Yashiroda Y."/>
            <person name="Shirai A."/>
            <person name="Kamata A."/>
            <person name="Sekido S."/>
            <person name="Kobayashi Y."/>
            <person name="Hashimoto A."/>
            <person name="Hamamoto M."/>
            <person name="Hiraoka Y."/>
            <person name="Horinouchi S."/>
            <person name="Yoshida M."/>
        </authorList>
    </citation>
    <scope>SUBCELLULAR LOCATION [LARGE SCALE ANALYSIS]</scope>
</reference>
<gene>
    <name type="ORF">SPAP8A3.11c</name>
</gene>
<accession>Q9UT06</accession>